<feature type="chain" id="PRO_0000173378" description="Multi-drug resistance efflux pump PmrA">
    <location>
        <begin position="1"/>
        <end position="399"/>
    </location>
</feature>
<feature type="transmembrane region" description="Helical" evidence="2">
    <location>
        <begin position="12"/>
        <end position="34"/>
    </location>
</feature>
<feature type="transmembrane region" description="Helical" evidence="2">
    <location>
        <begin position="49"/>
        <end position="71"/>
    </location>
</feature>
<feature type="transmembrane region" description="Helical" evidence="2">
    <location>
        <begin position="84"/>
        <end position="106"/>
    </location>
</feature>
<feature type="transmembrane region" description="Helical" evidence="2">
    <location>
        <begin position="140"/>
        <end position="162"/>
    </location>
</feature>
<feature type="transmembrane region" description="Helical" evidence="2">
    <location>
        <begin position="167"/>
        <end position="186"/>
    </location>
</feature>
<feature type="transmembrane region" description="Helical" evidence="2">
    <location>
        <begin position="217"/>
        <end position="239"/>
    </location>
</feature>
<feature type="transmembrane region" description="Helical" evidence="2">
    <location>
        <begin position="248"/>
        <end position="270"/>
    </location>
</feature>
<feature type="transmembrane region" description="Helical" evidence="2">
    <location>
        <begin position="306"/>
        <end position="328"/>
    </location>
</feature>
<feature type="transmembrane region" description="Helical" evidence="2">
    <location>
        <begin position="340"/>
        <end position="362"/>
    </location>
</feature>
<feature type="transmembrane region" description="Helical" evidence="2">
    <location>
        <begin position="366"/>
        <end position="388"/>
    </location>
</feature>
<protein>
    <recommendedName>
        <fullName>Multi-drug resistance efflux pump PmrA</fullName>
    </recommendedName>
</protein>
<name>PMRA_STRR6</name>
<dbReference type="EMBL" id="AE007317">
    <property type="protein sequence ID" value="AAK99679.1"/>
    <property type="molecule type" value="Genomic_DNA"/>
</dbReference>
<dbReference type="PIR" id="C97981">
    <property type="entry name" value="C97981"/>
</dbReference>
<dbReference type="RefSeq" id="NP_358469.1">
    <property type="nucleotide sequence ID" value="NC_003098.1"/>
</dbReference>
<dbReference type="RefSeq" id="WP_000136147.1">
    <property type="nucleotide sequence ID" value="NC_003098.1"/>
</dbReference>
<dbReference type="SMR" id="P0A4K5"/>
<dbReference type="STRING" id="171101.spr0875"/>
<dbReference type="CARD" id="ARO:3000822">
    <property type="molecule name" value="pmrA"/>
    <property type="mechanism identifier" value="ARO:0010000"/>
    <property type="mechanism name" value="antibiotic efflux"/>
</dbReference>
<dbReference type="KEGG" id="spr:spr0875"/>
<dbReference type="PATRIC" id="fig|171101.6.peg.962"/>
<dbReference type="eggNOG" id="COG2814">
    <property type="taxonomic scope" value="Bacteria"/>
</dbReference>
<dbReference type="HOGENOM" id="CLU_001265_57_3_9"/>
<dbReference type="Proteomes" id="UP000000586">
    <property type="component" value="Chromosome"/>
</dbReference>
<dbReference type="GO" id="GO:0005886">
    <property type="term" value="C:plasma membrane"/>
    <property type="evidence" value="ECO:0007669"/>
    <property type="project" value="UniProtKB-SubCell"/>
</dbReference>
<dbReference type="GO" id="GO:0022857">
    <property type="term" value="F:transmembrane transporter activity"/>
    <property type="evidence" value="ECO:0007669"/>
    <property type="project" value="InterPro"/>
</dbReference>
<dbReference type="CDD" id="cd17391">
    <property type="entry name" value="MFS_MdtG_MDR_like"/>
    <property type="match status" value="1"/>
</dbReference>
<dbReference type="FunFam" id="1.20.1250.20:FF:000587">
    <property type="entry name" value="Multi-drug resistance efflux pump PmrA"/>
    <property type="match status" value="1"/>
</dbReference>
<dbReference type="Gene3D" id="1.20.1250.20">
    <property type="entry name" value="MFS general substrate transporter like domains"/>
    <property type="match status" value="2"/>
</dbReference>
<dbReference type="InterPro" id="IPR011701">
    <property type="entry name" value="MFS"/>
</dbReference>
<dbReference type="InterPro" id="IPR020846">
    <property type="entry name" value="MFS_dom"/>
</dbReference>
<dbReference type="InterPro" id="IPR050497">
    <property type="entry name" value="MFS_MdtG_subfamily"/>
</dbReference>
<dbReference type="InterPro" id="IPR005828">
    <property type="entry name" value="MFS_sugar_transport-like"/>
</dbReference>
<dbReference type="InterPro" id="IPR036259">
    <property type="entry name" value="MFS_trans_sf"/>
</dbReference>
<dbReference type="InterPro" id="IPR001958">
    <property type="entry name" value="Tet-R_TetA/multi-R_MdtG-like"/>
</dbReference>
<dbReference type="PANTHER" id="PTHR43414">
    <property type="entry name" value="MULTIDRUG RESISTANCE PROTEIN MDTG"/>
    <property type="match status" value="1"/>
</dbReference>
<dbReference type="PANTHER" id="PTHR43414:SF6">
    <property type="entry name" value="MULTIDRUG RESISTANCE PROTEIN MDTG"/>
    <property type="match status" value="1"/>
</dbReference>
<dbReference type="Pfam" id="PF07690">
    <property type="entry name" value="MFS_1"/>
    <property type="match status" value="1"/>
</dbReference>
<dbReference type="Pfam" id="PF00083">
    <property type="entry name" value="Sugar_tr"/>
    <property type="match status" value="1"/>
</dbReference>
<dbReference type="PRINTS" id="PR01035">
    <property type="entry name" value="TCRTETA"/>
</dbReference>
<dbReference type="SUPFAM" id="SSF103473">
    <property type="entry name" value="MFS general substrate transporter"/>
    <property type="match status" value="1"/>
</dbReference>
<dbReference type="PROSITE" id="PS50850">
    <property type="entry name" value="MFS"/>
    <property type="match status" value="1"/>
</dbReference>
<sequence length="399" mass="42840">MTEINWKDNLRIAWFGNFLTGASISLVVPFMPIFVENLGVGSQQVAFYAGLAISVSAISAALFSPIWGILADKYGRKPMMIRAGLAMTITMGGLAFVPNIYWLIFLRLLNGVFAGFVPNATALIASQVPKEKSGSALGTLSTGVVAGTLTGPFIGGFIAELFGIRTVFLLVGSFLFLAAILTICFIKEDFQPVAKEKAIPTKELFTSVKYPYLLLNLFLTSFVIQFSAQSIGPILALYVRDLGQTENLLFVSGLIVSSMGFSSMMSAGVMGKLGDKVGNHRLLVVAQFYSVIIYLLCANASSPLQLGLYRFLFGLGTGALIPGVNALLSKMTPKAGISRVFAFNQVFFYLGGVVGPMAGSAVAGQFGYHAVFYATSLCVAFSCLFNLIQFRTLLKVKEI</sequence>
<gene>
    <name type="primary">pmrA</name>
    <name type="ordered locus">spr0875</name>
</gene>
<accession>P0A4K5</accession>
<accession>Q9ZEX9</accession>
<reference key="1">
    <citation type="journal article" date="2001" name="J. Bacteriol.">
        <title>Genome of the bacterium Streptococcus pneumoniae strain R6.</title>
        <authorList>
            <person name="Hoskins J."/>
            <person name="Alborn W.E. Jr."/>
            <person name="Arnold J."/>
            <person name="Blaszczak L.C."/>
            <person name="Burgett S."/>
            <person name="DeHoff B.S."/>
            <person name="Estrem S.T."/>
            <person name="Fritz L."/>
            <person name="Fu D.-J."/>
            <person name="Fuller W."/>
            <person name="Geringer C."/>
            <person name="Gilmour R."/>
            <person name="Glass J.S."/>
            <person name="Khoja H."/>
            <person name="Kraft A.R."/>
            <person name="Lagace R.E."/>
            <person name="LeBlanc D.J."/>
            <person name="Lee L.N."/>
            <person name="Lefkowitz E.J."/>
            <person name="Lu J."/>
            <person name="Matsushima P."/>
            <person name="McAhren S.M."/>
            <person name="McHenney M."/>
            <person name="McLeaster K."/>
            <person name="Mundy C.W."/>
            <person name="Nicas T.I."/>
            <person name="Norris F.H."/>
            <person name="O'Gara M."/>
            <person name="Peery R.B."/>
            <person name="Robertson G.T."/>
            <person name="Rockey P."/>
            <person name="Sun P.-M."/>
            <person name="Winkler M.E."/>
            <person name="Yang Y."/>
            <person name="Young-Bellido M."/>
            <person name="Zhao G."/>
            <person name="Zook C.A."/>
            <person name="Baltz R.H."/>
            <person name="Jaskunas S.R."/>
            <person name="Rosteck P.R. Jr."/>
            <person name="Skatrud P.L."/>
            <person name="Glass J.I."/>
        </authorList>
    </citation>
    <scope>NUCLEOTIDE SEQUENCE [LARGE SCALE GENOMIC DNA]</scope>
    <source>
        <strain>ATCC BAA-255 / R6</strain>
    </source>
</reference>
<proteinExistence type="inferred from homology"/>
<evidence type="ECO:0000250" key="1"/>
<evidence type="ECO:0000255" key="2"/>
<evidence type="ECO:0000305" key="3"/>
<keyword id="KW-1003">Cell membrane</keyword>
<keyword id="KW-0472">Membrane</keyword>
<keyword id="KW-1185">Reference proteome</keyword>
<keyword id="KW-0812">Transmembrane</keyword>
<keyword id="KW-1133">Transmembrane helix</keyword>
<keyword id="KW-0813">Transport</keyword>
<comment type="function">
    <text evidence="1">Efflux pump for various substrates.</text>
</comment>
<comment type="subcellular location">
    <subcellularLocation>
        <location evidence="3">Cell membrane</location>
        <topology evidence="3">Multi-pass membrane protein</topology>
    </subcellularLocation>
</comment>
<comment type="similarity">
    <text evidence="3">Belongs to the major facilitator superfamily. TCR/Tet family.</text>
</comment>
<organism>
    <name type="scientific">Streptococcus pneumoniae (strain ATCC BAA-255 / R6)</name>
    <dbReference type="NCBI Taxonomy" id="171101"/>
    <lineage>
        <taxon>Bacteria</taxon>
        <taxon>Bacillati</taxon>
        <taxon>Bacillota</taxon>
        <taxon>Bacilli</taxon>
        <taxon>Lactobacillales</taxon>
        <taxon>Streptococcaceae</taxon>
        <taxon>Streptococcus</taxon>
    </lineage>
</organism>